<gene>
    <name type="primary">ECM14</name>
    <name type="ORF">ARB_04942</name>
</gene>
<sequence>MHFSVRLSLFLTLASSLPLVSAVPQHEDQAYTFSSSGRSAATDTDPALEVRQETQRTPSAWTRLRDSLVESVWGLPQRSEGCESRPRNRAKTVSRAPATLQARYGEDVVLRFTIKNQEEVKALVEASNILFLDVWGSHDDWVDIRLSRDVIPSLLGLLPPSLQTSHVPLIRDLAQTIYESYPKAGSASPSQQGPTTRRFSPSASTSKSKPHETKNIFFQDYQPLSVLLPWMRLLVSMFSSHTTLISVGTTAEGRDIPALRVGVHPTNNAQQAPRRRTIVISGGTHAREWISVSTVSYIAYSFITGYGKSKSITKLLEQFDYVFIPTVNPDGYAYTFSTDRLWRKNRQQTSLSFCPGIDLDHSWGYEWDGNATRSNPCSESYAGDQPFEAVEAREIASWARNEVTVNNVHFVAFVDLHSYSQQILYPYGHSCAHLPANLENLEELGAGLAKAIRKSSRENYDVKAACRGIVASCTGDKDADEPATSSALESTAGSALDWFFHDLDVRFSYQIKLRDRGSYGFLLPREHIVPTGKEIYRAMVAMGKFLVSPHVLEEDIDGLRASEEPQDYDNDLEDGEDDKDEQGSTVFRAQADDLQS</sequence>
<evidence type="ECO:0000250" key="1">
    <source>
        <dbReference type="UniProtKB" id="P00730"/>
    </source>
</evidence>
<evidence type="ECO:0000250" key="2">
    <source>
        <dbReference type="UniProtKB" id="P15085"/>
    </source>
</evidence>
<evidence type="ECO:0000250" key="3">
    <source>
        <dbReference type="UniProtKB" id="P38836"/>
    </source>
</evidence>
<evidence type="ECO:0000255" key="4"/>
<evidence type="ECO:0000255" key="5">
    <source>
        <dbReference type="PROSITE-ProRule" id="PRU01379"/>
    </source>
</evidence>
<evidence type="ECO:0000256" key="6">
    <source>
        <dbReference type="SAM" id="MobiDB-lite"/>
    </source>
</evidence>
<evidence type="ECO:0000305" key="7"/>
<proteinExistence type="inferred from homology"/>
<name>ECM14_ARTBC</name>
<organism>
    <name type="scientific">Arthroderma benhamiae (strain ATCC MYA-4681 / CBS 112371)</name>
    <name type="common">Trichophyton mentagrophytes</name>
    <dbReference type="NCBI Taxonomy" id="663331"/>
    <lineage>
        <taxon>Eukaryota</taxon>
        <taxon>Fungi</taxon>
        <taxon>Dikarya</taxon>
        <taxon>Ascomycota</taxon>
        <taxon>Pezizomycotina</taxon>
        <taxon>Eurotiomycetes</taxon>
        <taxon>Eurotiomycetidae</taxon>
        <taxon>Onygenales</taxon>
        <taxon>Arthrodermataceae</taxon>
        <taxon>Trichophyton</taxon>
    </lineage>
</organism>
<protein>
    <recommendedName>
        <fullName evidence="7">Inactive metallocarboxypeptidase ECM14</fullName>
    </recommendedName>
</protein>
<keyword id="KW-0961">Cell wall biogenesis/degradation</keyword>
<keyword id="KW-1015">Disulfide bond</keyword>
<keyword id="KW-0325">Glycoprotein</keyword>
<keyword id="KW-0479">Metal-binding</keyword>
<keyword id="KW-1185">Reference proteome</keyword>
<keyword id="KW-0964">Secreted</keyword>
<keyword id="KW-0732">Signal</keyword>
<keyword id="KW-0926">Vacuole</keyword>
<keyword id="KW-0862">Zinc</keyword>
<accession>D4AKU7</accession>
<comment type="function">
    <text evidence="3">Inactive carboxypeptidase that may play a role in cell wall organization and biogenesis.</text>
</comment>
<comment type="cofactor">
    <cofactor evidence="1">
        <name>Zn(2+)</name>
        <dbReference type="ChEBI" id="CHEBI:29105"/>
    </cofactor>
    <text evidence="1">Binds 1 zinc ion per subunit.</text>
</comment>
<comment type="subcellular location">
    <subcellularLocation>
        <location evidence="3">Vacuole</location>
    </subcellularLocation>
    <subcellularLocation>
        <location evidence="3">Secreted</location>
    </subcellularLocation>
</comment>
<comment type="similarity">
    <text evidence="7">Belongs to the peptidase M14 family.</text>
</comment>
<comment type="caution">
    <text evidence="3">Lacks the conserved Glu residue in position 512 essential for carbopeptidase activity. The mature form lacks catalytic activity towards synthetic peptide substrates.</text>
</comment>
<reference key="1">
    <citation type="journal article" date="2011" name="Genome Biol.">
        <title>Comparative and functional genomics provide insights into the pathogenicity of dermatophytic fungi.</title>
        <authorList>
            <person name="Burmester A."/>
            <person name="Shelest E."/>
            <person name="Gloeckner G."/>
            <person name="Heddergott C."/>
            <person name="Schindler S."/>
            <person name="Staib P."/>
            <person name="Heidel A."/>
            <person name="Felder M."/>
            <person name="Petzold A."/>
            <person name="Szafranski K."/>
            <person name="Feuermann M."/>
            <person name="Pedruzzi I."/>
            <person name="Priebe S."/>
            <person name="Groth M."/>
            <person name="Winkler R."/>
            <person name="Li W."/>
            <person name="Kniemeyer O."/>
            <person name="Schroeckh V."/>
            <person name="Hertweck C."/>
            <person name="Hube B."/>
            <person name="White T.C."/>
            <person name="Platzer M."/>
            <person name="Guthke R."/>
            <person name="Heitman J."/>
            <person name="Woestemeyer J."/>
            <person name="Zipfel P.F."/>
            <person name="Monod M."/>
            <person name="Brakhage A.A."/>
        </authorList>
    </citation>
    <scope>NUCLEOTIDE SEQUENCE [LARGE SCALE GENOMIC DNA]</scope>
    <source>
        <strain>ATCC MYA-4681 / CBS 112371</strain>
    </source>
</reference>
<feature type="signal peptide" evidence="4">
    <location>
        <begin position="1"/>
        <end position="22"/>
    </location>
</feature>
<feature type="propeptide" id="PRO_0000453232" evidence="3">
    <location>
        <begin position="23"/>
        <end position="184"/>
    </location>
</feature>
<feature type="chain" id="PRO_0000411173" description="Inactive metallocarboxypeptidase ECM14">
    <location>
        <begin position="185"/>
        <end position="596"/>
    </location>
</feature>
<feature type="domain" description="Peptidase M14" evidence="5">
    <location>
        <begin position="220"/>
        <end position="546"/>
    </location>
</feature>
<feature type="region of interest" description="Disordered" evidence="6">
    <location>
        <begin position="182"/>
        <end position="211"/>
    </location>
</feature>
<feature type="region of interest" description="Disordered" evidence="6">
    <location>
        <begin position="557"/>
        <end position="596"/>
    </location>
</feature>
<feature type="compositionally biased region" description="Polar residues" evidence="6">
    <location>
        <begin position="187"/>
        <end position="207"/>
    </location>
</feature>
<feature type="compositionally biased region" description="Acidic residues" evidence="6">
    <location>
        <begin position="564"/>
        <end position="580"/>
    </location>
</feature>
<feature type="compositionally biased region" description="Polar residues" evidence="6">
    <location>
        <begin position="583"/>
        <end position="596"/>
    </location>
</feature>
<feature type="binding site" evidence="1">
    <location>
        <begin position="285"/>
        <end position="288"/>
    </location>
    <ligand>
        <name>substrate</name>
    </ligand>
</feature>
<feature type="binding site" evidence="5">
    <location>
        <position position="285"/>
    </location>
    <ligand>
        <name>Zn(2+)</name>
        <dbReference type="ChEBI" id="CHEBI:29105"/>
        <note>catalytic</note>
    </ligand>
</feature>
<feature type="binding site" evidence="5">
    <location>
        <position position="288"/>
    </location>
    <ligand>
        <name>Zn(2+)</name>
        <dbReference type="ChEBI" id="CHEBI:29105"/>
        <note>catalytic</note>
    </ligand>
</feature>
<feature type="binding site" evidence="1">
    <location>
        <position position="343"/>
    </location>
    <ligand>
        <name>substrate</name>
    </ligand>
</feature>
<feature type="binding site" evidence="1">
    <location>
        <begin position="360"/>
        <end position="361"/>
    </location>
    <ligand>
        <name>substrate</name>
    </ligand>
</feature>
<feature type="binding site" evidence="5">
    <location>
        <position position="417"/>
    </location>
    <ligand>
        <name>Zn(2+)</name>
        <dbReference type="ChEBI" id="CHEBI:29105"/>
        <note>catalytic</note>
    </ligand>
</feature>
<feature type="binding site" evidence="1">
    <location>
        <begin position="418"/>
        <end position="419"/>
    </location>
    <ligand>
        <name>substrate</name>
    </ligand>
</feature>
<feature type="glycosylation site" description="N-linked (GlcNAc...) asparagine" evidence="4">
    <location>
        <position position="370"/>
    </location>
</feature>
<feature type="disulfide bond" evidence="2">
    <location>
        <begin position="354"/>
        <end position="377"/>
    </location>
</feature>
<dbReference type="EMBL" id="ABSU01000002">
    <property type="protein sequence ID" value="EFE36006.1"/>
    <property type="molecule type" value="Genomic_DNA"/>
</dbReference>
<dbReference type="RefSeq" id="XP_003016651.1">
    <property type="nucleotide sequence ID" value="XM_003016605.1"/>
</dbReference>
<dbReference type="SMR" id="D4AKU7"/>
<dbReference type="GlyCosmos" id="D4AKU7">
    <property type="glycosylation" value="1 site, No reported glycans"/>
</dbReference>
<dbReference type="GeneID" id="9522135"/>
<dbReference type="KEGG" id="abe:ARB_04942"/>
<dbReference type="eggNOG" id="KOG2650">
    <property type="taxonomic scope" value="Eukaryota"/>
</dbReference>
<dbReference type="HOGENOM" id="CLU_019326_1_0_1"/>
<dbReference type="OMA" id="WFYHQLH"/>
<dbReference type="OrthoDB" id="3626597at2759"/>
<dbReference type="Proteomes" id="UP000008866">
    <property type="component" value="Unassembled WGS sequence"/>
</dbReference>
<dbReference type="GO" id="GO:0005576">
    <property type="term" value="C:extracellular region"/>
    <property type="evidence" value="ECO:0007669"/>
    <property type="project" value="UniProtKB-SubCell"/>
</dbReference>
<dbReference type="GO" id="GO:0005773">
    <property type="term" value="C:vacuole"/>
    <property type="evidence" value="ECO:0007669"/>
    <property type="project" value="UniProtKB-SubCell"/>
</dbReference>
<dbReference type="GO" id="GO:0008270">
    <property type="term" value="F:zinc ion binding"/>
    <property type="evidence" value="ECO:0007669"/>
    <property type="project" value="InterPro"/>
</dbReference>
<dbReference type="GO" id="GO:0071555">
    <property type="term" value="P:cell wall organization"/>
    <property type="evidence" value="ECO:0007669"/>
    <property type="project" value="UniProtKB-KW"/>
</dbReference>
<dbReference type="GO" id="GO:0006508">
    <property type="term" value="P:proteolysis"/>
    <property type="evidence" value="ECO:0007669"/>
    <property type="project" value="InterPro"/>
</dbReference>
<dbReference type="CDD" id="cd03860">
    <property type="entry name" value="M14_CP_A-B_like"/>
    <property type="match status" value="1"/>
</dbReference>
<dbReference type="FunFam" id="3.40.630.10:FF:000060">
    <property type="entry name" value="Putative metallocarboxypeptidase ecm14"/>
    <property type="match status" value="1"/>
</dbReference>
<dbReference type="Gene3D" id="3.40.630.10">
    <property type="entry name" value="Zn peptidases"/>
    <property type="match status" value="1"/>
</dbReference>
<dbReference type="InterPro" id="IPR000834">
    <property type="entry name" value="Peptidase_M14"/>
</dbReference>
<dbReference type="PANTHER" id="PTHR11705:SF147">
    <property type="entry name" value="INACTIVE METALLOCARBOXYPEPTIDASE ECM14"/>
    <property type="match status" value="1"/>
</dbReference>
<dbReference type="PANTHER" id="PTHR11705">
    <property type="entry name" value="PROTEASE FAMILY M14 CARBOXYPEPTIDASE A,B"/>
    <property type="match status" value="1"/>
</dbReference>
<dbReference type="Pfam" id="PF00246">
    <property type="entry name" value="Peptidase_M14"/>
    <property type="match status" value="1"/>
</dbReference>
<dbReference type="PRINTS" id="PR00765">
    <property type="entry name" value="CRBOXYPTASEA"/>
</dbReference>
<dbReference type="SMART" id="SM00631">
    <property type="entry name" value="Zn_pept"/>
    <property type="match status" value="1"/>
</dbReference>
<dbReference type="SUPFAM" id="SSF53187">
    <property type="entry name" value="Zn-dependent exopeptidases"/>
    <property type="match status" value="1"/>
</dbReference>
<dbReference type="PROSITE" id="PS52035">
    <property type="entry name" value="PEPTIDASE_M14"/>
    <property type="match status" value="1"/>
</dbReference>